<keyword id="KW-0067">ATP-binding</keyword>
<keyword id="KW-0131">Cell cycle</keyword>
<keyword id="KW-0132">Cell division</keyword>
<keyword id="KW-0133">Cell shape</keyword>
<keyword id="KW-0961">Cell wall biogenesis/degradation</keyword>
<keyword id="KW-0963">Cytoplasm</keyword>
<keyword id="KW-0436">Ligase</keyword>
<keyword id="KW-0547">Nucleotide-binding</keyword>
<keyword id="KW-0573">Peptidoglycan synthesis</keyword>
<evidence type="ECO:0000255" key="1">
    <source>
        <dbReference type="HAMAP-Rule" id="MF_00046"/>
    </source>
</evidence>
<feature type="chain" id="PRO_1000004392" description="UDP-N-acetylmuramate--L-alanine ligase">
    <location>
        <begin position="1"/>
        <end position="467"/>
    </location>
</feature>
<feature type="binding site" evidence="1">
    <location>
        <begin position="114"/>
        <end position="120"/>
    </location>
    <ligand>
        <name>ATP</name>
        <dbReference type="ChEBI" id="CHEBI:30616"/>
    </ligand>
</feature>
<organism>
    <name type="scientific">Rhodopseudomonas palustris (strain BisA53)</name>
    <dbReference type="NCBI Taxonomy" id="316055"/>
    <lineage>
        <taxon>Bacteria</taxon>
        <taxon>Pseudomonadati</taxon>
        <taxon>Pseudomonadota</taxon>
        <taxon>Alphaproteobacteria</taxon>
        <taxon>Hyphomicrobiales</taxon>
        <taxon>Nitrobacteraceae</taxon>
        <taxon>Rhodopseudomonas</taxon>
    </lineage>
</organism>
<protein>
    <recommendedName>
        <fullName evidence="1">UDP-N-acetylmuramate--L-alanine ligase</fullName>
        <ecNumber evidence="1">6.3.2.8</ecNumber>
    </recommendedName>
    <alternativeName>
        <fullName evidence="1">UDP-N-acetylmuramoyl-L-alanine synthetase</fullName>
    </alternativeName>
</protein>
<comment type="function">
    <text evidence="1">Cell wall formation.</text>
</comment>
<comment type="catalytic activity">
    <reaction evidence="1">
        <text>UDP-N-acetyl-alpha-D-muramate + L-alanine + ATP = UDP-N-acetyl-alpha-D-muramoyl-L-alanine + ADP + phosphate + H(+)</text>
        <dbReference type="Rhea" id="RHEA:23372"/>
        <dbReference type="ChEBI" id="CHEBI:15378"/>
        <dbReference type="ChEBI" id="CHEBI:30616"/>
        <dbReference type="ChEBI" id="CHEBI:43474"/>
        <dbReference type="ChEBI" id="CHEBI:57972"/>
        <dbReference type="ChEBI" id="CHEBI:70757"/>
        <dbReference type="ChEBI" id="CHEBI:83898"/>
        <dbReference type="ChEBI" id="CHEBI:456216"/>
        <dbReference type="EC" id="6.3.2.8"/>
    </reaction>
</comment>
<comment type="pathway">
    <text evidence="1">Cell wall biogenesis; peptidoglycan biosynthesis.</text>
</comment>
<comment type="subcellular location">
    <subcellularLocation>
        <location evidence="1">Cytoplasm</location>
    </subcellularLocation>
</comment>
<comment type="similarity">
    <text evidence="1">Belongs to the MurCDEF family.</text>
</comment>
<sequence length="467" mass="49980">MRLPREIGPIHFVGIGGIGMSGIAEVLCNLGYTVQGSDASESANVARLREKGIAISVGHKAENVAGADVVVVSTAIKRDNPELLAARAQRIPVVRRAEMLAELMRLKSCVAIAGTHGKTTTTSMVAALLDAGEFDPTVINGGIINAYGTNARLGAGEWMVVEADESDGTFLKLPADVAIVTNVDPEHLDHFKTFEAVQNAFRDFVENVPFYGFAVMCIDHPVVQALVGKIEDRRIITYGENPQADVRLLDLKPNGGASTFKVAFRDRKANTAHEIADLKLPMPGRHNALNATAAIAVAHELGLSDDTIRKALAGFGGVRRRFTKTGDWNGVSIIDDYGHHPVEIAAVLKAARESTKTKVIAVVQPHRFTRLQSLFEEFCTCFNDADAVIVAEVYPAGEAPIPGIDRDNFVLGLRAHGHREVIPLQESAALAGVVHSIAKPGDYVVLLGAGNITQWAYALPGELKALG</sequence>
<gene>
    <name evidence="1" type="primary">murC</name>
    <name type="ordered locus">RPE_2108</name>
</gene>
<reference key="1">
    <citation type="submission" date="2006-09" db="EMBL/GenBank/DDBJ databases">
        <title>Complete sequence of Rhodopseudomonas palustris BisA53.</title>
        <authorList>
            <consortium name="US DOE Joint Genome Institute"/>
            <person name="Copeland A."/>
            <person name="Lucas S."/>
            <person name="Lapidus A."/>
            <person name="Barry K."/>
            <person name="Detter J.C."/>
            <person name="Glavina del Rio T."/>
            <person name="Hammon N."/>
            <person name="Israni S."/>
            <person name="Dalin E."/>
            <person name="Tice H."/>
            <person name="Pitluck S."/>
            <person name="Chain P."/>
            <person name="Malfatti S."/>
            <person name="Shin M."/>
            <person name="Vergez L."/>
            <person name="Schmutz J."/>
            <person name="Larimer F."/>
            <person name="Land M."/>
            <person name="Hauser L."/>
            <person name="Pelletier D.A."/>
            <person name="Kyrpides N."/>
            <person name="Kim E."/>
            <person name="Harwood C.S."/>
            <person name="Oda Y."/>
            <person name="Richardson P."/>
        </authorList>
    </citation>
    <scope>NUCLEOTIDE SEQUENCE [LARGE SCALE GENOMIC DNA]</scope>
    <source>
        <strain>BisA53</strain>
    </source>
</reference>
<accession>Q07PT2</accession>
<dbReference type="EC" id="6.3.2.8" evidence="1"/>
<dbReference type="EMBL" id="CP000463">
    <property type="protein sequence ID" value="ABJ06052.1"/>
    <property type="molecule type" value="Genomic_DNA"/>
</dbReference>
<dbReference type="SMR" id="Q07PT2"/>
<dbReference type="STRING" id="316055.RPE_2108"/>
<dbReference type="KEGG" id="rpe:RPE_2108"/>
<dbReference type="eggNOG" id="COG0773">
    <property type="taxonomic scope" value="Bacteria"/>
</dbReference>
<dbReference type="HOGENOM" id="CLU_028104_2_2_5"/>
<dbReference type="OrthoDB" id="9804126at2"/>
<dbReference type="UniPathway" id="UPA00219"/>
<dbReference type="GO" id="GO:0005737">
    <property type="term" value="C:cytoplasm"/>
    <property type="evidence" value="ECO:0007669"/>
    <property type="project" value="UniProtKB-SubCell"/>
</dbReference>
<dbReference type="GO" id="GO:0005524">
    <property type="term" value="F:ATP binding"/>
    <property type="evidence" value="ECO:0007669"/>
    <property type="project" value="UniProtKB-UniRule"/>
</dbReference>
<dbReference type="GO" id="GO:0008763">
    <property type="term" value="F:UDP-N-acetylmuramate-L-alanine ligase activity"/>
    <property type="evidence" value="ECO:0007669"/>
    <property type="project" value="UniProtKB-UniRule"/>
</dbReference>
<dbReference type="GO" id="GO:0051301">
    <property type="term" value="P:cell division"/>
    <property type="evidence" value="ECO:0007669"/>
    <property type="project" value="UniProtKB-KW"/>
</dbReference>
<dbReference type="GO" id="GO:0071555">
    <property type="term" value="P:cell wall organization"/>
    <property type="evidence" value="ECO:0007669"/>
    <property type="project" value="UniProtKB-KW"/>
</dbReference>
<dbReference type="GO" id="GO:0009252">
    <property type="term" value="P:peptidoglycan biosynthetic process"/>
    <property type="evidence" value="ECO:0007669"/>
    <property type="project" value="UniProtKB-UniRule"/>
</dbReference>
<dbReference type="GO" id="GO:0008360">
    <property type="term" value="P:regulation of cell shape"/>
    <property type="evidence" value="ECO:0007669"/>
    <property type="project" value="UniProtKB-KW"/>
</dbReference>
<dbReference type="Gene3D" id="3.90.190.20">
    <property type="entry name" value="Mur ligase, C-terminal domain"/>
    <property type="match status" value="1"/>
</dbReference>
<dbReference type="Gene3D" id="3.40.1190.10">
    <property type="entry name" value="Mur-like, catalytic domain"/>
    <property type="match status" value="1"/>
</dbReference>
<dbReference type="Gene3D" id="3.40.50.720">
    <property type="entry name" value="NAD(P)-binding Rossmann-like Domain"/>
    <property type="match status" value="1"/>
</dbReference>
<dbReference type="HAMAP" id="MF_00046">
    <property type="entry name" value="MurC"/>
    <property type="match status" value="1"/>
</dbReference>
<dbReference type="InterPro" id="IPR036565">
    <property type="entry name" value="Mur-like_cat_sf"/>
</dbReference>
<dbReference type="InterPro" id="IPR004101">
    <property type="entry name" value="Mur_ligase_C"/>
</dbReference>
<dbReference type="InterPro" id="IPR036615">
    <property type="entry name" value="Mur_ligase_C_dom_sf"/>
</dbReference>
<dbReference type="InterPro" id="IPR013221">
    <property type="entry name" value="Mur_ligase_cen"/>
</dbReference>
<dbReference type="InterPro" id="IPR000713">
    <property type="entry name" value="Mur_ligase_N"/>
</dbReference>
<dbReference type="InterPro" id="IPR050061">
    <property type="entry name" value="MurCDEF_pg_biosynth"/>
</dbReference>
<dbReference type="InterPro" id="IPR005758">
    <property type="entry name" value="UDP-N-AcMur_Ala_ligase_MurC"/>
</dbReference>
<dbReference type="NCBIfam" id="TIGR01082">
    <property type="entry name" value="murC"/>
    <property type="match status" value="1"/>
</dbReference>
<dbReference type="PANTHER" id="PTHR43445:SF3">
    <property type="entry name" value="UDP-N-ACETYLMURAMATE--L-ALANINE LIGASE"/>
    <property type="match status" value="1"/>
</dbReference>
<dbReference type="PANTHER" id="PTHR43445">
    <property type="entry name" value="UDP-N-ACETYLMURAMATE--L-ALANINE LIGASE-RELATED"/>
    <property type="match status" value="1"/>
</dbReference>
<dbReference type="Pfam" id="PF01225">
    <property type="entry name" value="Mur_ligase"/>
    <property type="match status" value="1"/>
</dbReference>
<dbReference type="Pfam" id="PF02875">
    <property type="entry name" value="Mur_ligase_C"/>
    <property type="match status" value="1"/>
</dbReference>
<dbReference type="Pfam" id="PF08245">
    <property type="entry name" value="Mur_ligase_M"/>
    <property type="match status" value="1"/>
</dbReference>
<dbReference type="SUPFAM" id="SSF51984">
    <property type="entry name" value="MurCD N-terminal domain"/>
    <property type="match status" value="1"/>
</dbReference>
<dbReference type="SUPFAM" id="SSF53623">
    <property type="entry name" value="MurD-like peptide ligases, catalytic domain"/>
    <property type="match status" value="1"/>
</dbReference>
<dbReference type="SUPFAM" id="SSF53244">
    <property type="entry name" value="MurD-like peptide ligases, peptide-binding domain"/>
    <property type="match status" value="1"/>
</dbReference>
<name>MURC_RHOP5</name>
<proteinExistence type="inferred from homology"/>